<evidence type="ECO:0000255" key="1">
    <source>
        <dbReference type="HAMAP-Rule" id="MF_00378"/>
    </source>
</evidence>
<sequence length="417" mass="45582">MSSEKASSKSTPEAPWPVREVNTQVKQWIERLGHLWVEGQLAQINVKPNWKLSYLTLRDVEQEMSVQLTCPTDIIRNRPTPLKDGDRVIVYGKPAFYAGRGTFSLWVTDIRPVGIGELLARIEELRKRLAAEGLFDPARKKRLPFLPNRVGLITGRGSAAERDVLSVAKDRWPEVQFEVINTAVQGASAVPEIIEALRVLDQDPRVDVIIIARGGGSVEDLLPFSEEALQRAVAAAQTPVVSAIGHEPDTPVLDNVADLRAATPTDAAKRVVPDVAEERMLINQLRSRSAAALRGWVQREQQALAAIRTRPVLADPMTPINRRRDEIAQAVGLIRRDVTHLVRTEQALVASLRAQVSALGPSATLARGYSVVQVIPRDGSAPEVVTTIEQSPPGSQLRIRVADGSITAASMGTQQAN</sequence>
<feature type="chain" id="PRO_0000197843" description="Exodeoxyribonuclease 7 large subunit">
    <location>
        <begin position="1"/>
        <end position="417"/>
    </location>
</feature>
<protein>
    <recommendedName>
        <fullName evidence="1">Exodeoxyribonuclease 7 large subunit</fullName>
        <ecNumber evidence="1">3.1.11.6</ecNumber>
    </recommendedName>
    <alternativeName>
        <fullName evidence="1">Exodeoxyribonuclease VII large subunit</fullName>
        <shortName evidence="1">Exonuclease VII large subunit</shortName>
    </alternativeName>
</protein>
<organism>
    <name type="scientific">Corynebacterium glutamicum (strain ATCC 13032 / DSM 20300 / JCM 1318 / BCRC 11384 / CCUG 27702 / LMG 3730 / NBRC 12168 / NCIMB 10025 / NRRL B-2784 / 534)</name>
    <dbReference type="NCBI Taxonomy" id="196627"/>
    <lineage>
        <taxon>Bacteria</taxon>
        <taxon>Bacillati</taxon>
        <taxon>Actinomycetota</taxon>
        <taxon>Actinomycetes</taxon>
        <taxon>Mycobacteriales</taxon>
        <taxon>Corynebacteriaceae</taxon>
        <taxon>Corynebacterium</taxon>
    </lineage>
</organism>
<proteinExistence type="inferred from homology"/>
<comment type="function">
    <text evidence="1">Bidirectionally degrades single-stranded DNA into large acid-insoluble oligonucleotides, which are then degraded further into small acid-soluble oligonucleotides.</text>
</comment>
<comment type="catalytic activity">
    <reaction evidence="1">
        <text>Exonucleolytic cleavage in either 5'- to 3'- or 3'- to 5'-direction to yield nucleoside 5'-phosphates.</text>
        <dbReference type="EC" id="3.1.11.6"/>
    </reaction>
</comment>
<comment type="subunit">
    <text evidence="1">Heterooligomer composed of large and small subunits.</text>
</comment>
<comment type="subcellular location">
    <subcellularLocation>
        <location evidence="1">Cytoplasm</location>
    </subcellularLocation>
</comment>
<comment type="similarity">
    <text evidence="1">Belongs to the XseA family.</text>
</comment>
<name>EX7L_CORGL</name>
<keyword id="KW-0963">Cytoplasm</keyword>
<keyword id="KW-0269">Exonuclease</keyword>
<keyword id="KW-0378">Hydrolase</keyword>
<keyword id="KW-0540">Nuclease</keyword>
<keyword id="KW-1185">Reference proteome</keyword>
<gene>
    <name evidence="1" type="primary">xseA</name>
    <name type="ordered locus">Cgl1025</name>
    <name type="ordered locus">cg1163</name>
</gene>
<dbReference type="EC" id="3.1.11.6" evidence="1"/>
<dbReference type="EMBL" id="BA000036">
    <property type="protein sequence ID" value="BAB98418.1"/>
    <property type="molecule type" value="Genomic_DNA"/>
</dbReference>
<dbReference type="EMBL" id="BX927151">
    <property type="protein sequence ID" value="CAF19727.1"/>
    <property type="molecule type" value="Genomic_DNA"/>
</dbReference>
<dbReference type="RefSeq" id="NP_600248.1">
    <property type="nucleotide sequence ID" value="NC_003450.3"/>
</dbReference>
<dbReference type="RefSeq" id="WP_011014055.1">
    <property type="nucleotide sequence ID" value="NC_006958.1"/>
</dbReference>
<dbReference type="SMR" id="Q8NRM3"/>
<dbReference type="STRING" id="196627.cg1163"/>
<dbReference type="GeneID" id="1019010"/>
<dbReference type="KEGG" id="cgb:cg1163"/>
<dbReference type="KEGG" id="cgl:Cgl1025"/>
<dbReference type="PATRIC" id="fig|196627.13.peg.1003"/>
<dbReference type="eggNOG" id="COG1570">
    <property type="taxonomic scope" value="Bacteria"/>
</dbReference>
<dbReference type="HOGENOM" id="CLU_023625_2_1_11"/>
<dbReference type="OrthoDB" id="9802795at2"/>
<dbReference type="BioCyc" id="CORYNE:G18NG-10597-MONOMER"/>
<dbReference type="Proteomes" id="UP000000582">
    <property type="component" value="Chromosome"/>
</dbReference>
<dbReference type="Proteomes" id="UP000001009">
    <property type="component" value="Chromosome"/>
</dbReference>
<dbReference type="GO" id="GO:0005737">
    <property type="term" value="C:cytoplasm"/>
    <property type="evidence" value="ECO:0007669"/>
    <property type="project" value="UniProtKB-SubCell"/>
</dbReference>
<dbReference type="GO" id="GO:0009318">
    <property type="term" value="C:exodeoxyribonuclease VII complex"/>
    <property type="evidence" value="ECO:0007669"/>
    <property type="project" value="InterPro"/>
</dbReference>
<dbReference type="GO" id="GO:0008855">
    <property type="term" value="F:exodeoxyribonuclease VII activity"/>
    <property type="evidence" value="ECO:0007669"/>
    <property type="project" value="UniProtKB-UniRule"/>
</dbReference>
<dbReference type="GO" id="GO:0003676">
    <property type="term" value="F:nucleic acid binding"/>
    <property type="evidence" value="ECO:0007669"/>
    <property type="project" value="InterPro"/>
</dbReference>
<dbReference type="GO" id="GO:0006308">
    <property type="term" value="P:DNA catabolic process"/>
    <property type="evidence" value="ECO:0007669"/>
    <property type="project" value="UniProtKB-UniRule"/>
</dbReference>
<dbReference type="CDD" id="cd04489">
    <property type="entry name" value="ExoVII_LU_OBF"/>
    <property type="match status" value="1"/>
</dbReference>
<dbReference type="HAMAP" id="MF_00378">
    <property type="entry name" value="Exonuc_7_L"/>
    <property type="match status" value="1"/>
</dbReference>
<dbReference type="InterPro" id="IPR003753">
    <property type="entry name" value="Exonuc_VII_L"/>
</dbReference>
<dbReference type="InterPro" id="IPR020579">
    <property type="entry name" value="Exonuc_VII_lsu_C"/>
</dbReference>
<dbReference type="InterPro" id="IPR025824">
    <property type="entry name" value="OB-fold_nuc-bd_dom"/>
</dbReference>
<dbReference type="NCBIfam" id="TIGR00237">
    <property type="entry name" value="xseA"/>
    <property type="match status" value="1"/>
</dbReference>
<dbReference type="PANTHER" id="PTHR30008">
    <property type="entry name" value="EXODEOXYRIBONUCLEASE 7 LARGE SUBUNIT"/>
    <property type="match status" value="1"/>
</dbReference>
<dbReference type="PANTHER" id="PTHR30008:SF0">
    <property type="entry name" value="EXODEOXYRIBONUCLEASE 7 LARGE SUBUNIT"/>
    <property type="match status" value="1"/>
</dbReference>
<dbReference type="Pfam" id="PF02601">
    <property type="entry name" value="Exonuc_VII_L"/>
    <property type="match status" value="2"/>
</dbReference>
<dbReference type="Pfam" id="PF13742">
    <property type="entry name" value="tRNA_anti_2"/>
    <property type="match status" value="1"/>
</dbReference>
<accession>Q8NRM3</accession>
<reference key="1">
    <citation type="journal article" date="2003" name="Appl. Microbiol. Biotechnol.">
        <title>The Corynebacterium glutamicum genome: features and impacts on biotechnological processes.</title>
        <authorList>
            <person name="Ikeda M."/>
            <person name="Nakagawa S."/>
        </authorList>
    </citation>
    <scope>NUCLEOTIDE SEQUENCE [LARGE SCALE GENOMIC DNA]</scope>
    <source>
        <strain>ATCC 13032 / DSM 20300 / JCM 1318 / BCRC 11384 / CCUG 27702 / LMG 3730 / NBRC 12168 / NCIMB 10025 / NRRL B-2784 / 534</strain>
    </source>
</reference>
<reference key="2">
    <citation type="journal article" date="2003" name="J. Biotechnol.">
        <title>The complete Corynebacterium glutamicum ATCC 13032 genome sequence and its impact on the production of L-aspartate-derived amino acids and vitamins.</title>
        <authorList>
            <person name="Kalinowski J."/>
            <person name="Bathe B."/>
            <person name="Bartels D."/>
            <person name="Bischoff N."/>
            <person name="Bott M."/>
            <person name="Burkovski A."/>
            <person name="Dusch N."/>
            <person name="Eggeling L."/>
            <person name="Eikmanns B.J."/>
            <person name="Gaigalat L."/>
            <person name="Goesmann A."/>
            <person name="Hartmann M."/>
            <person name="Huthmacher K."/>
            <person name="Kraemer R."/>
            <person name="Linke B."/>
            <person name="McHardy A.C."/>
            <person name="Meyer F."/>
            <person name="Moeckel B."/>
            <person name="Pfefferle W."/>
            <person name="Puehler A."/>
            <person name="Rey D.A."/>
            <person name="Rueckert C."/>
            <person name="Rupp O."/>
            <person name="Sahm H."/>
            <person name="Wendisch V.F."/>
            <person name="Wiegraebe I."/>
            <person name="Tauch A."/>
        </authorList>
    </citation>
    <scope>NUCLEOTIDE SEQUENCE [LARGE SCALE GENOMIC DNA]</scope>
    <source>
        <strain>ATCC 13032 / DSM 20300 / JCM 1318 / BCRC 11384 / CCUG 27702 / LMG 3730 / NBRC 12168 / NCIMB 10025 / NRRL B-2784 / 534</strain>
    </source>
</reference>